<organism>
    <name type="scientific">Ehrlichia canis (strain Jake)</name>
    <dbReference type="NCBI Taxonomy" id="269484"/>
    <lineage>
        <taxon>Bacteria</taxon>
        <taxon>Pseudomonadati</taxon>
        <taxon>Pseudomonadota</taxon>
        <taxon>Alphaproteobacteria</taxon>
        <taxon>Rickettsiales</taxon>
        <taxon>Anaplasmataceae</taxon>
        <taxon>Ehrlichia</taxon>
    </lineage>
</organism>
<proteinExistence type="inferred from homology"/>
<feature type="chain" id="PRO_0000238244" description="ATP synthase subunit alpha">
    <location>
        <begin position="1"/>
        <end position="509"/>
    </location>
</feature>
<feature type="binding site" evidence="1">
    <location>
        <begin position="171"/>
        <end position="178"/>
    </location>
    <ligand>
        <name>ATP</name>
        <dbReference type="ChEBI" id="CHEBI:30616"/>
    </ligand>
</feature>
<feature type="site" description="Required for activity" evidence="1">
    <location>
        <position position="372"/>
    </location>
</feature>
<name>ATPA_EHRCJ</name>
<evidence type="ECO:0000255" key="1">
    <source>
        <dbReference type="HAMAP-Rule" id="MF_01346"/>
    </source>
</evidence>
<keyword id="KW-0066">ATP synthesis</keyword>
<keyword id="KW-0067">ATP-binding</keyword>
<keyword id="KW-0997">Cell inner membrane</keyword>
<keyword id="KW-1003">Cell membrane</keyword>
<keyword id="KW-0139">CF(1)</keyword>
<keyword id="KW-0375">Hydrogen ion transport</keyword>
<keyword id="KW-0406">Ion transport</keyword>
<keyword id="KW-0472">Membrane</keyword>
<keyword id="KW-0547">Nucleotide-binding</keyword>
<keyword id="KW-1278">Translocase</keyword>
<keyword id="KW-0813">Transport</keyword>
<reference key="1">
    <citation type="journal article" date="2006" name="J. Bacteriol.">
        <title>The genome of the obligately intracellular bacterium Ehrlichia canis reveals themes of complex membrane structure and immune evasion strategies.</title>
        <authorList>
            <person name="Mavromatis K."/>
            <person name="Doyle C.K."/>
            <person name="Lykidis A."/>
            <person name="Ivanova N."/>
            <person name="Francino M.P."/>
            <person name="Chain P."/>
            <person name="Shin M."/>
            <person name="Malfatti S."/>
            <person name="Larimer F."/>
            <person name="Copeland A."/>
            <person name="Detter J.C."/>
            <person name="Land M."/>
            <person name="Richardson P.M."/>
            <person name="Yu X.J."/>
            <person name="Walker D.H."/>
            <person name="McBride J.W."/>
            <person name="Kyrpides N.C."/>
        </authorList>
    </citation>
    <scope>NUCLEOTIDE SEQUENCE [LARGE SCALE GENOMIC DNA]</scope>
    <source>
        <strain>Jake</strain>
    </source>
</reference>
<sequence>MNNTISPGEVLRVIKERIENFDNQVKADSVGEVISIKDGIAIVYGLEKAKFGEVVVFTNGVTGIVLGLDCDTASVVIFGNERSVGEGDTAKCTGKLMDVPVGFELLGRVVDALGNPIDGAGNVDSKIRLPVEIKAPGIIARQSVSEPLQTGIKVIDMLIPIGRGQRELIIGDRKTGKTAIAIDTIINQKLHNDTVSEKEKVYCIYVAIGQKNSAIARIVDKLRVSGALEYTIVVAAGASDTVSFQYLAPYAACAMGEFFRDNGMHCLIVYDDLSKHAVAYRQMSLLLRRPPGREAYPGDVFFLHSRLLERAAKMSDEKGAGSLTALPIIETQAGDVSAYVPTNVISITDGQIFLESEIFYKGFRPAVNVGLSVSRVGSAAQIKSVKKVAGSVKLSLAQYRELEDFAKFGSDIDVHSKKVLDRGRRMMELLKQKQYSPLSVAEQVAVIFAGTSGCLDDISVNNVGKFEEMLLKELNENYPDVLSNISNNFTDDVKDLLLDIISKVTSSFK</sequence>
<gene>
    <name evidence="1" type="primary">atpA</name>
    <name type="ordered locus">Ecaj_0083</name>
</gene>
<comment type="function">
    <text evidence="1">Produces ATP from ADP in the presence of a proton gradient across the membrane. The alpha chain is a regulatory subunit.</text>
</comment>
<comment type="catalytic activity">
    <reaction evidence="1">
        <text>ATP + H2O + 4 H(+)(in) = ADP + phosphate + 5 H(+)(out)</text>
        <dbReference type="Rhea" id="RHEA:57720"/>
        <dbReference type="ChEBI" id="CHEBI:15377"/>
        <dbReference type="ChEBI" id="CHEBI:15378"/>
        <dbReference type="ChEBI" id="CHEBI:30616"/>
        <dbReference type="ChEBI" id="CHEBI:43474"/>
        <dbReference type="ChEBI" id="CHEBI:456216"/>
        <dbReference type="EC" id="7.1.2.2"/>
    </reaction>
</comment>
<comment type="subunit">
    <text evidence="1">F-type ATPases have 2 components, CF(1) - the catalytic core - and CF(0) - the membrane proton channel. CF(1) has five subunits: alpha(3), beta(3), gamma(1), delta(1), epsilon(1). CF(0) has three main subunits: a(1), b(2) and c(9-12). The alpha and beta chains form an alternating ring which encloses part of the gamma chain. CF(1) is attached to CF(0) by a central stalk formed by the gamma and epsilon chains, while a peripheral stalk is formed by the delta and b chains.</text>
</comment>
<comment type="subcellular location">
    <subcellularLocation>
        <location evidence="1">Cell inner membrane</location>
        <topology evidence="1">Peripheral membrane protein</topology>
    </subcellularLocation>
</comment>
<comment type="similarity">
    <text evidence="1">Belongs to the ATPase alpha/beta chains family.</text>
</comment>
<protein>
    <recommendedName>
        <fullName evidence="1">ATP synthase subunit alpha</fullName>
        <ecNumber evidence="1">7.1.2.2</ecNumber>
    </recommendedName>
    <alternativeName>
        <fullName evidence="1">ATP synthase F1 sector subunit alpha</fullName>
    </alternativeName>
    <alternativeName>
        <fullName evidence="1">F-ATPase subunit alpha</fullName>
    </alternativeName>
</protein>
<accession>Q3YT21</accession>
<dbReference type="EC" id="7.1.2.2" evidence="1"/>
<dbReference type="EMBL" id="CP000107">
    <property type="protein sequence ID" value="AAZ68134.1"/>
    <property type="molecule type" value="Genomic_DNA"/>
</dbReference>
<dbReference type="RefSeq" id="WP_011304212.1">
    <property type="nucleotide sequence ID" value="NC_007354.1"/>
</dbReference>
<dbReference type="SMR" id="Q3YT21"/>
<dbReference type="FunCoup" id="Q3YT21">
    <property type="interactions" value="258"/>
</dbReference>
<dbReference type="STRING" id="269484.Ecaj_0083"/>
<dbReference type="KEGG" id="ecn:Ecaj_0083"/>
<dbReference type="eggNOG" id="COG0056">
    <property type="taxonomic scope" value="Bacteria"/>
</dbReference>
<dbReference type="HOGENOM" id="CLU_010091_2_1_5"/>
<dbReference type="InParanoid" id="Q3YT21"/>
<dbReference type="Proteomes" id="UP000000435">
    <property type="component" value="Chromosome"/>
</dbReference>
<dbReference type="GO" id="GO:0005886">
    <property type="term" value="C:plasma membrane"/>
    <property type="evidence" value="ECO:0007669"/>
    <property type="project" value="UniProtKB-SubCell"/>
</dbReference>
<dbReference type="GO" id="GO:0045259">
    <property type="term" value="C:proton-transporting ATP synthase complex"/>
    <property type="evidence" value="ECO:0007669"/>
    <property type="project" value="UniProtKB-KW"/>
</dbReference>
<dbReference type="GO" id="GO:0043531">
    <property type="term" value="F:ADP binding"/>
    <property type="evidence" value="ECO:0007669"/>
    <property type="project" value="TreeGrafter"/>
</dbReference>
<dbReference type="GO" id="GO:0005524">
    <property type="term" value="F:ATP binding"/>
    <property type="evidence" value="ECO:0007669"/>
    <property type="project" value="UniProtKB-UniRule"/>
</dbReference>
<dbReference type="GO" id="GO:0046933">
    <property type="term" value="F:proton-transporting ATP synthase activity, rotational mechanism"/>
    <property type="evidence" value="ECO:0007669"/>
    <property type="project" value="UniProtKB-UniRule"/>
</dbReference>
<dbReference type="CDD" id="cd18113">
    <property type="entry name" value="ATP-synt_F1_alpha_C"/>
    <property type="match status" value="1"/>
</dbReference>
<dbReference type="CDD" id="cd18116">
    <property type="entry name" value="ATP-synt_F1_alpha_N"/>
    <property type="match status" value="1"/>
</dbReference>
<dbReference type="CDD" id="cd01132">
    <property type="entry name" value="F1-ATPase_alpha_CD"/>
    <property type="match status" value="1"/>
</dbReference>
<dbReference type="FunFam" id="1.20.150.20:FF:000001">
    <property type="entry name" value="ATP synthase subunit alpha"/>
    <property type="match status" value="1"/>
</dbReference>
<dbReference type="FunFam" id="3.40.50.300:FF:002432">
    <property type="entry name" value="ATP synthase subunit alpha, mitochondrial"/>
    <property type="match status" value="1"/>
</dbReference>
<dbReference type="Gene3D" id="2.40.30.20">
    <property type="match status" value="1"/>
</dbReference>
<dbReference type="Gene3D" id="1.20.150.20">
    <property type="entry name" value="ATP synthase alpha/beta chain, C-terminal domain"/>
    <property type="match status" value="1"/>
</dbReference>
<dbReference type="Gene3D" id="3.40.50.300">
    <property type="entry name" value="P-loop containing nucleotide triphosphate hydrolases"/>
    <property type="match status" value="1"/>
</dbReference>
<dbReference type="HAMAP" id="MF_01346">
    <property type="entry name" value="ATP_synth_alpha_bact"/>
    <property type="match status" value="1"/>
</dbReference>
<dbReference type="InterPro" id="IPR023366">
    <property type="entry name" value="ATP_synth_asu-like_sf"/>
</dbReference>
<dbReference type="InterPro" id="IPR000793">
    <property type="entry name" value="ATP_synth_asu_C"/>
</dbReference>
<dbReference type="InterPro" id="IPR038376">
    <property type="entry name" value="ATP_synth_asu_C_sf"/>
</dbReference>
<dbReference type="InterPro" id="IPR033732">
    <property type="entry name" value="ATP_synth_F1_a_nt-bd_dom"/>
</dbReference>
<dbReference type="InterPro" id="IPR005294">
    <property type="entry name" value="ATP_synth_F1_asu"/>
</dbReference>
<dbReference type="InterPro" id="IPR020003">
    <property type="entry name" value="ATPase_a/bsu_AS"/>
</dbReference>
<dbReference type="InterPro" id="IPR004100">
    <property type="entry name" value="ATPase_F1/V1/A1_a/bsu_N"/>
</dbReference>
<dbReference type="InterPro" id="IPR036121">
    <property type="entry name" value="ATPase_F1/V1/A1_a/bsu_N_sf"/>
</dbReference>
<dbReference type="InterPro" id="IPR000194">
    <property type="entry name" value="ATPase_F1/V1/A1_a/bsu_nucl-bd"/>
</dbReference>
<dbReference type="InterPro" id="IPR027417">
    <property type="entry name" value="P-loop_NTPase"/>
</dbReference>
<dbReference type="NCBIfam" id="TIGR00962">
    <property type="entry name" value="atpA"/>
    <property type="match status" value="1"/>
</dbReference>
<dbReference type="NCBIfam" id="NF009884">
    <property type="entry name" value="PRK13343.1"/>
    <property type="match status" value="1"/>
</dbReference>
<dbReference type="PANTHER" id="PTHR48082">
    <property type="entry name" value="ATP SYNTHASE SUBUNIT ALPHA, MITOCHONDRIAL"/>
    <property type="match status" value="1"/>
</dbReference>
<dbReference type="PANTHER" id="PTHR48082:SF2">
    <property type="entry name" value="ATP SYNTHASE SUBUNIT ALPHA, MITOCHONDRIAL"/>
    <property type="match status" value="1"/>
</dbReference>
<dbReference type="Pfam" id="PF00006">
    <property type="entry name" value="ATP-synt_ab"/>
    <property type="match status" value="1"/>
</dbReference>
<dbReference type="Pfam" id="PF00306">
    <property type="entry name" value="ATP-synt_ab_C"/>
    <property type="match status" value="1"/>
</dbReference>
<dbReference type="Pfam" id="PF02874">
    <property type="entry name" value="ATP-synt_ab_N"/>
    <property type="match status" value="1"/>
</dbReference>
<dbReference type="PIRSF" id="PIRSF039088">
    <property type="entry name" value="F_ATPase_subunit_alpha"/>
    <property type="match status" value="1"/>
</dbReference>
<dbReference type="SUPFAM" id="SSF47917">
    <property type="entry name" value="C-terminal domain of alpha and beta subunits of F1 ATP synthase"/>
    <property type="match status" value="1"/>
</dbReference>
<dbReference type="SUPFAM" id="SSF50615">
    <property type="entry name" value="N-terminal domain of alpha and beta subunits of F1 ATP synthase"/>
    <property type="match status" value="1"/>
</dbReference>
<dbReference type="SUPFAM" id="SSF52540">
    <property type="entry name" value="P-loop containing nucleoside triphosphate hydrolases"/>
    <property type="match status" value="1"/>
</dbReference>
<dbReference type="PROSITE" id="PS00152">
    <property type="entry name" value="ATPASE_ALPHA_BETA"/>
    <property type="match status" value="1"/>
</dbReference>